<gene>
    <name type="primary">CD247</name>
    <name type="synonym">CD3Z</name>
</gene>
<sequence length="163" mass="18568">MKWKALFTAAILQAQLPITEAQSFGLLDPKLCYLLDGILFIYGVILTALFLRVKFSRSADAPAYQQGQNQLYNELNLGRREEYDVLDKRRGRDPEMGGKPRRKNPQEGLYNELQKDKMAEAYSEIGMKGERRRGKGHDGLYQGLSTATKDTYDALHMQALPPR</sequence>
<accession>Q9XSJ9</accession>
<keyword id="KW-1064">Adaptive immunity</keyword>
<keyword id="KW-1003">Cell membrane</keyword>
<keyword id="KW-1015">Disulfide bond</keyword>
<keyword id="KW-0391">Immunity</keyword>
<keyword id="KW-0472">Membrane</keyword>
<keyword id="KW-0597">Phosphoprotein</keyword>
<keyword id="KW-0675">Receptor</keyword>
<keyword id="KW-1185">Reference proteome</keyword>
<keyword id="KW-0677">Repeat</keyword>
<keyword id="KW-0732">Signal</keyword>
<keyword id="KW-0812">Transmembrane</keyword>
<keyword id="KW-1133">Transmembrane helix</keyword>
<comment type="function">
    <text evidence="2">Part of the TCR-CD3 complex present on T-lymphocyte cell surface that plays an essential role in adaptive immune response. When antigen presenting cells (APCs) activate T-cell receptor (TCR), TCR-mediated signals are transmitted across the cell membrane by the CD3 chains CD3D, CD3E, CD3G and CD3Z. All CD3 chains contain immunoreceptor tyrosine-based activation motifs (ITAMs) in their cytoplasmic domain. Upon TCR engagement, these motifs become phosphorylated by Src family protein tyrosine kinases LCK and FYN, resulting in the activation of downstream signaling pathways. CD3Z ITAMs phosphorylation creates multiple docking sites for the protein kinase ZAP70 leading to ZAP70 phosphorylation and its conversion into a catalytically active enzyme. Plays an important role in intrathymic T-cell differentiation. Additionally, participates in the activity-dependent synapse formation of retinal ganglion cells (RGCs) in both the retina and dorsal lateral geniculate nucleus (dLGN).</text>
</comment>
<comment type="subunit">
    <text evidence="2 3">The TCR-CD3 complex is composed of a CD3D/CD3E and a CD3G/CD3E heterodimers that preferentially associate with TCRalpha and TCRbeta, respectively, to form TCRalpha/CD3E/CD3G and TCRbeta/CD3G/CD3E trimers. In turn, the hexamer interacts with CD3Z homodimer to form the TCR-CD3 complex. Alternatively, TCRalpha and TCRbeta can be replaced by TCRgamma and TCRdelta. Interacts with SLA. Interacts with TRAT1. Interacts with DOCK2. Interacts with SLA2. Interacts with SHB. Interacts with ZAP70. Interacts (tyrosine phosphorylated) with SHC1 (via SH2 domain). Interacts with PTPRC. Interacts with CRK; this interaction regulates CD3Z phosphorylation. Interacts (on T cell side) with CD81, ICAM1 and CD9 at immunological synapses between antigen-presenting cells and T cells. Interacts with CD160. Interacts with LY6E. Interacts with LY6E (By similarity). The signaling subunit of immunoglobulin gamma (IgG) Fc receptor complex. As a homodimer or a heterodimer with FCER1G, associates with the ligand binding subunit FCGR3A (via transmembrane domain); this interaction is a prerequisite for Fc receptor complex expression on the cell surface. Interacts with CD5 (By similarity).</text>
</comment>
<comment type="subcellular location">
    <subcellularLocation>
        <location evidence="3">Cell membrane</location>
        <topology evidence="2">Single-pass type I membrane protein</topology>
    </subcellularLocation>
</comment>
<comment type="domain">
    <text evidence="2">The ITAM domains mediate interaction with SHB.</text>
</comment>
<comment type="PTM">
    <text evidence="2">Phosphorylated on Tyr residues after T-cell receptor triggering by LCK in association with CD4/CD8.</text>
</comment>
<comment type="similarity">
    <text evidence="7">Belongs to the CD3Z/FCER1G family.</text>
</comment>
<name>CD3Z_PIG</name>
<organism>
    <name type="scientific">Sus scrofa</name>
    <name type="common">Pig</name>
    <dbReference type="NCBI Taxonomy" id="9823"/>
    <lineage>
        <taxon>Eukaryota</taxon>
        <taxon>Metazoa</taxon>
        <taxon>Chordata</taxon>
        <taxon>Craniata</taxon>
        <taxon>Vertebrata</taxon>
        <taxon>Euteleostomi</taxon>
        <taxon>Mammalia</taxon>
        <taxon>Eutheria</taxon>
        <taxon>Laurasiatheria</taxon>
        <taxon>Artiodactyla</taxon>
        <taxon>Suina</taxon>
        <taxon>Suidae</taxon>
        <taxon>Sus</taxon>
    </lineage>
</organism>
<proteinExistence type="evidence at transcript level"/>
<feature type="signal peptide" evidence="1">
    <location>
        <begin position="1"/>
        <end position="21"/>
    </location>
</feature>
<feature type="chain" id="PRO_0000016496" description="T-cell surface glycoprotein CD3 zeta chain">
    <location>
        <begin position="22"/>
        <end position="163"/>
    </location>
</feature>
<feature type="topological domain" description="Extracellular" evidence="4">
    <location>
        <begin position="22"/>
        <end position="30"/>
    </location>
</feature>
<feature type="transmembrane region" description="Helical" evidence="4">
    <location>
        <begin position="31"/>
        <end position="51"/>
    </location>
</feature>
<feature type="topological domain" description="Cytoplasmic" evidence="4">
    <location>
        <begin position="52"/>
        <end position="163"/>
    </location>
</feature>
<feature type="domain" description="ITAM 1" evidence="5">
    <location>
        <begin position="61"/>
        <end position="89"/>
    </location>
</feature>
<feature type="domain" description="ITAM 2" evidence="5">
    <location>
        <begin position="99"/>
        <end position="127"/>
    </location>
</feature>
<feature type="domain" description="ITAM 3" evidence="5">
    <location>
        <begin position="130"/>
        <end position="158"/>
    </location>
</feature>
<feature type="region of interest" description="Disordered" evidence="6">
    <location>
        <begin position="83"/>
        <end position="111"/>
    </location>
</feature>
<feature type="compositionally biased region" description="Basic and acidic residues" evidence="6">
    <location>
        <begin position="83"/>
        <end position="98"/>
    </location>
</feature>
<feature type="modified residue" description="Phosphoserine" evidence="2">
    <location>
        <position position="58"/>
    </location>
</feature>
<feature type="modified residue" description="Phosphotyrosine" evidence="2 5">
    <location>
        <position position="64"/>
    </location>
</feature>
<feature type="modified residue" description="Phosphotyrosine" evidence="2 5">
    <location>
        <position position="72"/>
    </location>
</feature>
<feature type="modified residue" description="Phosphotyrosine" evidence="2 5">
    <location>
        <position position="83"/>
    </location>
</feature>
<feature type="modified residue" description="Phosphotyrosine" evidence="2 5">
    <location>
        <position position="110"/>
    </location>
</feature>
<feature type="modified residue" description="Phosphotyrosine" evidence="2 5">
    <location>
        <position position="122"/>
    </location>
</feature>
<feature type="modified residue" description="Phosphotyrosine" evidence="2 5">
    <location>
        <position position="141"/>
    </location>
</feature>
<feature type="modified residue" description="Phosphotyrosine" evidence="2 5">
    <location>
        <position position="152"/>
    </location>
</feature>
<feature type="disulfide bond" description="Interchain" evidence="4">
    <location>
        <position position="32"/>
    </location>
</feature>
<protein>
    <recommendedName>
        <fullName>T-cell surface glycoprotein CD3 zeta chain</fullName>
    </recommendedName>
    <alternativeName>
        <fullName>T-cell receptor T3 zeta chain</fullName>
    </alternativeName>
    <cdAntigenName>CD247</cdAntigenName>
</protein>
<dbReference type="EMBL" id="AF153830">
    <property type="protein sequence ID" value="AAD34640.1"/>
    <property type="molecule type" value="mRNA"/>
</dbReference>
<dbReference type="BMRB" id="Q9XSJ9"/>
<dbReference type="SMR" id="Q9XSJ9"/>
<dbReference type="FunCoup" id="Q9XSJ9">
    <property type="interactions" value="324"/>
</dbReference>
<dbReference type="STRING" id="9823.ENSSSCP00000030740"/>
<dbReference type="InParanoid" id="Q9XSJ9"/>
<dbReference type="Proteomes" id="UP000008227">
    <property type="component" value="Unplaced"/>
</dbReference>
<dbReference type="Proteomes" id="UP000314985">
    <property type="component" value="Unplaced"/>
</dbReference>
<dbReference type="Proteomes" id="UP000694570">
    <property type="component" value="Unplaced"/>
</dbReference>
<dbReference type="Proteomes" id="UP000694571">
    <property type="component" value="Unplaced"/>
</dbReference>
<dbReference type="Proteomes" id="UP000694720">
    <property type="component" value="Unplaced"/>
</dbReference>
<dbReference type="Proteomes" id="UP000694722">
    <property type="component" value="Unplaced"/>
</dbReference>
<dbReference type="Proteomes" id="UP000694723">
    <property type="component" value="Unplaced"/>
</dbReference>
<dbReference type="Proteomes" id="UP000694724">
    <property type="component" value="Unplaced"/>
</dbReference>
<dbReference type="Proteomes" id="UP000694725">
    <property type="component" value="Unplaced"/>
</dbReference>
<dbReference type="Proteomes" id="UP000694726">
    <property type="component" value="Unplaced"/>
</dbReference>
<dbReference type="Proteomes" id="UP000694727">
    <property type="component" value="Unplaced"/>
</dbReference>
<dbReference type="Proteomes" id="UP000694728">
    <property type="component" value="Unplaced"/>
</dbReference>
<dbReference type="GO" id="GO:0042105">
    <property type="term" value="C:alpha-beta T cell receptor complex"/>
    <property type="evidence" value="ECO:0000318"/>
    <property type="project" value="GO_Central"/>
</dbReference>
<dbReference type="GO" id="GO:0033001">
    <property type="term" value="C:Fc-gamma receptor III complex"/>
    <property type="evidence" value="ECO:0000250"/>
    <property type="project" value="UniProtKB"/>
</dbReference>
<dbReference type="GO" id="GO:0042803">
    <property type="term" value="F:protein homodimerization activity"/>
    <property type="evidence" value="ECO:0000250"/>
    <property type="project" value="UniProtKB"/>
</dbReference>
<dbReference type="GO" id="GO:0004888">
    <property type="term" value="F:transmembrane signaling receptor activity"/>
    <property type="evidence" value="ECO:0007669"/>
    <property type="project" value="InterPro"/>
</dbReference>
<dbReference type="GO" id="GO:0002250">
    <property type="term" value="P:adaptive immune response"/>
    <property type="evidence" value="ECO:0007669"/>
    <property type="project" value="UniProtKB-KW"/>
</dbReference>
<dbReference type="GO" id="GO:0050852">
    <property type="term" value="P:T cell receptor signaling pathway"/>
    <property type="evidence" value="ECO:0000318"/>
    <property type="project" value="GO_Central"/>
</dbReference>
<dbReference type="InterPro" id="IPR021663">
    <property type="entry name" value="CD3_zeta/IgE_Fc_rcpt_gamma"/>
</dbReference>
<dbReference type="InterPro" id="IPR003110">
    <property type="entry name" value="Phos_immunorcpt_sig_ITAM"/>
</dbReference>
<dbReference type="InterPro" id="IPR024128">
    <property type="entry name" value="T-cell_CD3_zeta"/>
</dbReference>
<dbReference type="PANTHER" id="PTHR10035">
    <property type="entry name" value="T-CELL SURFACE GLYCOPROTEIN CD3 ZETA CHAIN"/>
    <property type="match status" value="1"/>
</dbReference>
<dbReference type="PANTHER" id="PTHR10035:SF2">
    <property type="entry name" value="T-CELL SURFACE GLYCOPROTEIN CD3 ZETA CHAIN"/>
    <property type="match status" value="1"/>
</dbReference>
<dbReference type="Pfam" id="PF02189">
    <property type="entry name" value="ITAM"/>
    <property type="match status" value="2"/>
</dbReference>
<dbReference type="Pfam" id="PF11628">
    <property type="entry name" value="TCR_zetazeta"/>
    <property type="match status" value="1"/>
</dbReference>
<dbReference type="SMART" id="SM00077">
    <property type="entry name" value="ITAM"/>
    <property type="match status" value="3"/>
</dbReference>
<dbReference type="PROSITE" id="PS51055">
    <property type="entry name" value="ITAM_1"/>
    <property type="match status" value="3"/>
</dbReference>
<evidence type="ECO:0000250" key="1"/>
<evidence type="ECO:0000250" key="2">
    <source>
        <dbReference type="UniProtKB" id="P20963"/>
    </source>
</evidence>
<evidence type="ECO:0000250" key="3">
    <source>
        <dbReference type="UniProtKB" id="P24161"/>
    </source>
</evidence>
<evidence type="ECO:0000255" key="4"/>
<evidence type="ECO:0000255" key="5">
    <source>
        <dbReference type="PROSITE-ProRule" id="PRU00379"/>
    </source>
</evidence>
<evidence type="ECO:0000256" key="6">
    <source>
        <dbReference type="SAM" id="MobiDB-lite"/>
    </source>
</evidence>
<evidence type="ECO:0000305" key="7"/>
<reference key="1">
    <citation type="submission" date="1999-05" db="EMBL/GenBank/DDBJ databases">
        <title>The molecular cloning of porcine CD3 zeta.</title>
        <authorList>
            <person name="Jie H.-B."/>
            <person name="Yim D."/>
            <person name="Kim Y.B."/>
        </authorList>
    </citation>
    <scope>NUCLEOTIDE SEQUENCE [MRNA]</scope>
    <source>
        <strain>Minnesota miniature</strain>
    </source>
</reference>